<keyword id="KW-1185">Reference proteome</keyword>
<keyword id="KW-0687">Ribonucleoprotein</keyword>
<keyword id="KW-0689">Ribosomal protein</keyword>
<keyword id="KW-0694">RNA-binding</keyword>
<keyword id="KW-0699">rRNA-binding</keyword>
<name>RL24_BUCAI</name>
<accession>P57580</accession>
<evidence type="ECO:0000255" key="1">
    <source>
        <dbReference type="HAMAP-Rule" id="MF_01326"/>
    </source>
</evidence>
<evidence type="ECO:0000305" key="2"/>
<comment type="function">
    <text evidence="1">One of two assembly initiator proteins, it binds directly to the 5'-end of the 23S rRNA, where it nucleates assembly of the 50S subunit.</text>
</comment>
<comment type="function">
    <text evidence="1">One of the proteins that surrounds the polypeptide exit tunnel on the outside of the subunit.</text>
</comment>
<comment type="subunit">
    <text evidence="1">Part of the 50S ribosomal subunit.</text>
</comment>
<comment type="similarity">
    <text evidence="1">Belongs to the universal ribosomal protein uL24 family.</text>
</comment>
<proteinExistence type="inferred from homology"/>
<organism>
    <name type="scientific">Buchnera aphidicola subsp. Acyrthosiphon pisum (strain APS)</name>
    <name type="common">Acyrthosiphon pisum symbiotic bacterium</name>
    <dbReference type="NCBI Taxonomy" id="107806"/>
    <lineage>
        <taxon>Bacteria</taxon>
        <taxon>Pseudomonadati</taxon>
        <taxon>Pseudomonadota</taxon>
        <taxon>Gammaproteobacteria</taxon>
        <taxon>Enterobacterales</taxon>
        <taxon>Erwiniaceae</taxon>
        <taxon>Buchnera</taxon>
    </lineage>
</organism>
<reference key="1">
    <citation type="journal article" date="2000" name="Nature">
        <title>Genome sequence of the endocellular bacterial symbiont of aphids Buchnera sp. APS.</title>
        <authorList>
            <person name="Shigenobu S."/>
            <person name="Watanabe H."/>
            <person name="Hattori M."/>
            <person name="Sakaki Y."/>
            <person name="Ishikawa H."/>
        </authorList>
    </citation>
    <scope>NUCLEOTIDE SEQUENCE [LARGE SCALE GENOMIC DNA]</scope>
    <source>
        <strain>APS</strain>
    </source>
</reference>
<protein>
    <recommendedName>
        <fullName evidence="1">Large ribosomal subunit protein uL24</fullName>
    </recommendedName>
    <alternativeName>
        <fullName evidence="2">50S ribosomal protein L24</fullName>
    </alternativeName>
</protein>
<sequence>MALKLRRNDSVVILTGKDKGKTGIIKNILSLNQVIVKGLNLIKKHQKPVPSQNKSGGIIEKEAPIHISNIAILNPESNKADRIGFRFEEGRKVRFFKSTGKTIQ</sequence>
<dbReference type="EMBL" id="BA000003">
    <property type="protein sequence ID" value="BAB13206.1"/>
    <property type="molecule type" value="Genomic_DNA"/>
</dbReference>
<dbReference type="RefSeq" id="NP_240320.1">
    <property type="nucleotide sequence ID" value="NC_002528.1"/>
</dbReference>
<dbReference type="RefSeq" id="WP_009874464.1">
    <property type="nucleotide sequence ID" value="NZ_AP036055.1"/>
</dbReference>
<dbReference type="SMR" id="P57580"/>
<dbReference type="STRING" id="563178.BUAP5A_506"/>
<dbReference type="EnsemblBacteria" id="BAB13206">
    <property type="protein sequence ID" value="BAB13206"/>
    <property type="gene ID" value="BAB13206"/>
</dbReference>
<dbReference type="KEGG" id="buc:BU513"/>
<dbReference type="PATRIC" id="fig|107806.10.peg.518"/>
<dbReference type="eggNOG" id="COG0198">
    <property type="taxonomic scope" value="Bacteria"/>
</dbReference>
<dbReference type="HOGENOM" id="CLU_093315_2_2_6"/>
<dbReference type="Proteomes" id="UP000001806">
    <property type="component" value="Chromosome"/>
</dbReference>
<dbReference type="GO" id="GO:1990904">
    <property type="term" value="C:ribonucleoprotein complex"/>
    <property type="evidence" value="ECO:0007669"/>
    <property type="project" value="UniProtKB-KW"/>
</dbReference>
<dbReference type="GO" id="GO:0005840">
    <property type="term" value="C:ribosome"/>
    <property type="evidence" value="ECO:0007669"/>
    <property type="project" value="UniProtKB-KW"/>
</dbReference>
<dbReference type="GO" id="GO:0019843">
    <property type="term" value="F:rRNA binding"/>
    <property type="evidence" value="ECO:0007669"/>
    <property type="project" value="UniProtKB-UniRule"/>
</dbReference>
<dbReference type="GO" id="GO:0003735">
    <property type="term" value="F:structural constituent of ribosome"/>
    <property type="evidence" value="ECO:0007669"/>
    <property type="project" value="InterPro"/>
</dbReference>
<dbReference type="GO" id="GO:0006412">
    <property type="term" value="P:translation"/>
    <property type="evidence" value="ECO:0007669"/>
    <property type="project" value="UniProtKB-UniRule"/>
</dbReference>
<dbReference type="CDD" id="cd06089">
    <property type="entry name" value="KOW_RPL26"/>
    <property type="match status" value="1"/>
</dbReference>
<dbReference type="FunFam" id="2.30.30.30:FF:000004">
    <property type="entry name" value="50S ribosomal protein L24"/>
    <property type="match status" value="1"/>
</dbReference>
<dbReference type="Gene3D" id="2.30.30.30">
    <property type="match status" value="1"/>
</dbReference>
<dbReference type="HAMAP" id="MF_01326_B">
    <property type="entry name" value="Ribosomal_uL24_B"/>
    <property type="match status" value="1"/>
</dbReference>
<dbReference type="InterPro" id="IPR005824">
    <property type="entry name" value="KOW"/>
</dbReference>
<dbReference type="InterPro" id="IPR014722">
    <property type="entry name" value="Rib_uL2_dom2"/>
</dbReference>
<dbReference type="InterPro" id="IPR003256">
    <property type="entry name" value="Ribosomal_uL24"/>
</dbReference>
<dbReference type="InterPro" id="IPR005825">
    <property type="entry name" value="Ribosomal_uL24_CS"/>
</dbReference>
<dbReference type="InterPro" id="IPR041988">
    <property type="entry name" value="Ribosomal_uL24_KOW"/>
</dbReference>
<dbReference type="InterPro" id="IPR008991">
    <property type="entry name" value="Translation_prot_SH3-like_sf"/>
</dbReference>
<dbReference type="NCBIfam" id="TIGR01079">
    <property type="entry name" value="rplX_bact"/>
    <property type="match status" value="1"/>
</dbReference>
<dbReference type="PANTHER" id="PTHR12903">
    <property type="entry name" value="MITOCHONDRIAL RIBOSOMAL PROTEIN L24"/>
    <property type="match status" value="1"/>
</dbReference>
<dbReference type="Pfam" id="PF00467">
    <property type="entry name" value="KOW"/>
    <property type="match status" value="1"/>
</dbReference>
<dbReference type="Pfam" id="PF17136">
    <property type="entry name" value="ribosomal_L24"/>
    <property type="match status" value="1"/>
</dbReference>
<dbReference type="SUPFAM" id="SSF50104">
    <property type="entry name" value="Translation proteins SH3-like domain"/>
    <property type="match status" value="1"/>
</dbReference>
<dbReference type="PROSITE" id="PS01108">
    <property type="entry name" value="RIBOSOMAL_L24"/>
    <property type="match status" value="1"/>
</dbReference>
<feature type="chain" id="PRO_0000130633" description="Large ribosomal subunit protein uL24">
    <location>
        <begin position="1"/>
        <end position="104"/>
    </location>
</feature>
<gene>
    <name evidence="1" type="primary">rplX</name>
    <name type="ordered locus">BU513</name>
</gene>